<organism>
    <name type="scientific">Syntrophotalea carbinolica (strain DSM 2380 / NBRC 103641 / GraBd1)</name>
    <name type="common">Pelobacter carbinolicus</name>
    <dbReference type="NCBI Taxonomy" id="338963"/>
    <lineage>
        <taxon>Bacteria</taxon>
        <taxon>Pseudomonadati</taxon>
        <taxon>Thermodesulfobacteriota</taxon>
        <taxon>Desulfuromonadia</taxon>
        <taxon>Desulfuromonadales</taxon>
        <taxon>Syntrophotaleaceae</taxon>
        <taxon>Syntrophotalea</taxon>
    </lineage>
</organism>
<protein>
    <recommendedName>
        <fullName evidence="1">Large ribosomal subunit protein bL31</fullName>
    </recommendedName>
    <alternativeName>
        <fullName evidence="2">50S ribosomal protein L31</fullName>
    </alternativeName>
</protein>
<dbReference type="EMBL" id="CP000142">
    <property type="protein sequence ID" value="ABA89930.1"/>
    <property type="molecule type" value="Genomic_DNA"/>
</dbReference>
<dbReference type="RefSeq" id="WP_011342473.1">
    <property type="nucleotide sequence ID" value="NC_007498.2"/>
</dbReference>
<dbReference type="SMR" id="Q3A127"/>
<dbReference type="STRING" id="338963.Pcar_2694"/>
<dbReference type="KEGG" id="pca:Pcar_2694"/>
<dbReference type="eggNOG" id="COG0254">
    <property type="taxonomic scope" value="Bacteria"/>
</dbReference>
<dbReference type="HOGENOM" id="CLU_114306_4_2_7"/>
<dbReference type="OrthoDB" id="9803251at2"/>
<dbReference type="Proteomes" id="UP000002534">
    <property type="component" value="Chromosome"/>
</dbReference>
<dbReference type="GO" id="GO:1990904">
    <property type="term" value="C:ribonucleoprotein complex"/>
    <property type="evidence" value="ECO:0007669"/>
    <property type="project" value="UniProtKB-KW"/>
</dbReference>
<dbReference type="GO" id="GO:0005840">
    <property type="term" value="C:ribosome"/>
    <property type="evidence" value="ECO:0007669"/>
    <property type="project" value="UniProtKB-KW"/>
</dbReference>
<dbReference type="GO" id="GO:0046872">
    <property type="term" value="F:metal ion binding"/>
    <property type="evidence" value="ECO:0007669"/>
    <property type="project" value="UniProtKB-KW"/>
</dbReference>
<dbReference type="GO" id="GO:0019843">
    <property type="term" value="F:rRNA binding"/>
    <property type="evidence" value="ECO:0007669"/>
    <property type="project" value="UniProtKB-KW"/>
</dbReference>
<dbReference type="GO" id="GO:0003735">
    <property type="term" value="F:structural constituent of ribosome"/>
    <property type="evidence" value="ECO:0007669"/>
    <property type="project" value="InterPro"/>
</dbReference>
<dbReference type="GO" id="GO:0006412">
    <property type="term" value="P:translation"/>
    <property type="evidence" value="ECO:0007669"/>
    <property type="project" value="UniProtKB-UniRule"/>
</dbReference>
<dbReference type="Gene3D" id="4.10.830.30">
    <property type="entry name" value="Ribosomal protein L31"/>
    <property type="match status" value="1"/>
</dbReference>
<dbReference type="HAMAP" id="MF_00501">
    <property type="entry name" value="Ribosomal_bL31_1"/>
    <property type="match status" value="1"/>
</dbReference>
<dbReference type="InterPro" id="IPR034704">
    <property type="entry name" value="Ribosomal_bL28/bL31-like_sf"/>
</dbReference>
<dbReference type="InterPro" id="IPR002150">
    <property type="entry name" value="Ribosomal_bL31"/>
</dbReference>
<dbReference type="InterPro" id="IPR027491">
    <property type="entry name" value="Ribosomal_bL31_A"/>
</dbReference>
<dbReference type="InterPro" id="IPR042105">
    <property type="entry name" value="Ribosomal_bL31_sf"/>
</dbReference>
<dbReference type="NCBIfam" id="TIGR00105">
    <property type="entry name" value="L31"/>
    <property type="match status" value="1"/>
</dbReference>
<dbReference type="NCBIfam" id="NF000612">
    <property type="entry name" value="PRK00019.1"/>
    <property type="match status" value="1"/>
</dbReference>
<dbReference type="NCBIfam" id="NF001809">
    <property type="entry name" value="PRK00528.1"/>
    <property type="match status" value="1"/>
</dbReference>
<dbReference type="PANTHER" id="PTHR33280">
    <property type="entry name" value="50S RIBOSOMAL PROTEIN L31, CHLOROPLASTIC"/>
    <property type="match status" value="1"/>
</dbReference>
<dbReference type="PANTHER" id="PTHR33280:SF6">
    <property type="entry name" value="LARGE RIBOSOMAL SUBUNIT PROTEIN BL31A"/>
    <property type="match status" value="1"/>
</dbReference>
<dbReference type="Pfam" id="PF01197">
    <property type="entry name" value="Ribosomal_L31"/>
    <property type="match status" value="1"/>
</dbReference>
<dbReference type="PRINTS" id="PR01249">
    <property type="entry name" value="RIBOSOMALL31"/>
</dbReference>
<dbReference type="SUPFAM" id="SSF143800">
    <property type="entry name" value="L28p-like"/>
    <property type="match status" value="1"/>
</dbReference>
<dbReference type="PROSITE" id="PS01143">
    <property type="entry name" value="RIBOSOMAL_L31"/>
    <property type="match status" value="1"/>
</dbReference>
<keyword id="KW-0479">Metal-binding</keyword>
<keyword id="KW-1185">Reference proteome</keyword>
<keyword id="KW-0687">Ribonucleoprotein</keyword>
<keyword id="KW-0689">Ribosomal protein</keyword>
<keyword id="KW-0694">RNA-binding</keyword>
<keyword id="KW-0699">rRNA-binding</keyword>
<keyword id="KW-0862">Zinc</keyword>
<evidence type="ECO:0000255" key="1">
    <source>
        <dbReference type="HAMAP-Rule" id="MF_00501"/>
    </source>
</evidence>
<evidence type="ECO:0000305" key="2"/>
<reference key="1">
    <citation type="submission" date="2005-10" db="EMBL/GenBank/DDBJ databases">
        <title>Complete sequence of Pelobacter carbinolicus DSM 2380.</title>
        <authorList>
            <person name="Copeland A."/>
            <person name="Lucas S."/>
            <person name="Lapidus A."/>
            <person name="Barry K."/>
            <person name="Detter J.C."/>
            <person name="Glavina T."/>
            <person name="Hammon N."/>
            <person name="Israni S."/>
            <person name="Pitluck S."/>
            <person name="Chertkov O."/>
            <person name="Schmutz J."/>
            <person name="Larimer F."/>
            <person name="Land M."/>
            <person name="Kyrpides N."/>
            <person name="Ivanova N."/>
            <person name="Richardson P."/>
        </authorList>
    </citation>
    <scope>NUCLEOTIDE SEQUENCE [LARGE SCALE GENOMIC DNA]</scope>
    <source>
        <strain>DSM 2380 / NBRC 103641 / GraBd1</strain>
    </source>
</reference>
<name>RL31_SYNC1</name>
<sequence>MKEGIHPKYEAVEVKCHCGNVIQTRSTKCADMQVEVCSACHPFYTGKQKLLDTAGRIDRFRKKYAKNNK</sequence>
<proteinExistence type="inferred from homology"/>
<gene>
    <name evidence="1" type="primary">rpmE</name>
    <name type="ordered locus">Pcar_2694</name>
</gene>
<accession>Q3A127</accession>
<comment type="function">
    <text evidence="1">Binds the 23S rRNA.</text>
</comment>
<comment type="cofactor">
    <cofactor evidence="1">
        <name>Zn(2+)</name>
        <dbReference type="ChEBI" id="CHEBI:29105"/>
    </cofactor>
    <text evidence="1">Binds 1 zinc ion per subunit.</text>
</comment>
<comment type="subunit">
    <text evidence="1">Part of the 50S ribosomal subunit.</text>
</comment>
<comment type="similarity">
    <text evidence="1">Belongs to the bacterial ribosomal protein bL31 family. Type A subfamily.</text>
</comment>
<feature type="chain" id="PRO_0000259205" description="Large ribosomal subunit protein bL31">
    <location>
        <begin position="1"/>
        <end position="69"/>
    </location>
</feature>
<feature type="binding site" evidence="1">
    <location>
        <position position="16"/>
    </location>
    <ligand>
        <name>Zn(2+)</name>
        <dbReference type="ChEBI" id="CHEBI:29105"/>
    </ligand>
</feature>
<feature type="binding site" evidence="1">
    <location>
        <position position="18"/>
    </location>
    <ligand>
        <name>Zn(2+)</name>
        <dbReference type="ChEBI" id="CHEBI:29105"/>
    </ligand>
</feature>
<feature type="binding site" evidence="1">
    <location>
        <position position="37"/>
    </location>
    <ligand>
        <name>Zn(2+)</name>
        <dbReference type="ChEBI" id="CHEBI:29105"/>
    </ligand>
</feature>
<feature type="binding site" evidence="1">
    <location>
        <position position="40"/>
    </location>
    <ligand>
        <name>Zn(2+)</name>
        <dbReference type="ChEBI" id="CHEBI:29105"/>
    </ligand>
</feature>